<protein>
    <recommendedName>
        <fullName>F-actin-capping protein subunit alpha-2</fullName>
    </recommendedName>
    <alternativeName>
        <fullName>CapZ alpha-2</fullName>
    </alternativeName>
</protein>
<feature type="initiator methionine" description="Removed" evidence="2">
    <location>
        <position position="1"/>
    </location>
</feature>
<feature type="chain" id="PRO_0000274183" description="F-actin-capping protein subunit alpha-2">
    <location>
        <begin position="2"/>
        <end position="286"/>
    </location>
</feature>
<feature type="modified residue" description="N-acetylalanine" evidence="2">
    <location>
        <position position="2"/>
    </location>
</feature>
<feature type="modified residue" description="Phosphoserine" evidence="2">
    <location>
        <position position="9"/>
    </location>
</feature>
<sequence>MADLEEQLSDEEKVRIAAKFIIHAPPGEFNEVFNDVRLLLNNDNLLREGAAHAFAQYNLDQFTPVKIEGYEDQVLITEHGDLGNGKFLDPKNRICFKFDHLRKEATDPRPYEAENTVESWRTSVETALRAYVKEHYPNGVCTVYGKKIDGQQTIIACIESHQFQAKNFWNGRWRSEWKFTISPSSTQVVGILKIQVHYYEDGNVQLVSHKDIQDSLTVSNEAQTAKEFIKIVEAAENEYQTAISENYQTMSDTTFKALRRQLPVTRTKIDWNKILSYKIGKEMQNA</sequence>
<dbReference type="EMBL" id="DP000003">
    <property type="protein sequence ID" value="AAY88980.1"/>
    <property type="molecule type" value="Genomic_DNA"/>
</dbReference>
<dbReference type="SMR" id="Q00PJ7"/>
<dbReference type="GO" id="GO:0030863">
    <property type="term" value="C:cortical cytoskeleton"/>
    <property type="evidence" value="ECO:0007669"/>
    <property type="project" value="TreeGrafter"/>
</dbReference>
<dbReference type="GO" id="GO:0008290">
    <property type="term" value="C:F-actin capping protein complex"/>
    <property type="evidence" value="ECO:0007669"/>
    <property type="project" value="InterPro"/>
</dbReference>
<dbReference type="GO" id="GO:0051015">
    <property type="term" value="F:actin filament binding"/>
    <property type="evidence" value="ECO:0007669"/>
    <property type="project" value="TreeGrafter"/>
</dbReference>
<dbReference type="GO" id="GO:0030036">
    <property type="term" value="P:actin cytoskeleton organization"/>
    <property type="evidence" value="ECO:0007669"/>
    <property type="project" value="TreeGrafter"/>
</dbReference>
<dbReference type="GO" id="GO:0051016">
    <property type="term" value="P:barbed-end actin filament capping"/>
    <property type="evidence" value="ECO:0007669"/>
    <property type="project" value="InterPro"/>
</dbReference>
<dbReference type="FunFam" id="3.30.1140.60:FF:000001">
    <property type="entry name" value="F-actin-capping protein subunit alpha"/>
    <property type="match status" value="1"/>
</dbReference>
<dbReference type="FunFam" id="3.90.1150.210:FF:000002">
    <property type="entry name" value="F-actin-capping protein subunit alpha"/>
    <property type="match status" value="1"/>
</dbReference>
<dbReference type="Gene3D" id="3.30.1140.60">
    <property type="entry name" value="F-actin capping protein, alpha subunit"/>
    <property type="match status" value="1"/>
</dbReference>
<dbReference type="Gene3D" id="3.90.1150.210">
    <property type="entry name" value="F-actin capping protein, beta subunit"/>
    <property type="match status" value="1"/>
</dbReference>
<dbReference type="InterPro" id="IPR002189">
    <property type="entry name" value="CapZ_alpha"/>
</dbReference>
<dbReference type="InterPro" id="IPR037282">
    <property type="entry name" value="CapZ_alpha/beta"/>
</dbReference>
<dbReference type="InterPro" id="IPR042276">
    <property type="entry name" value="CapZ_alpha/beta_2"/>
</dbReference>
<dbReference type="InterPro" id="IPR042489">
    <property type="entry name" value="CapZ_alpha_1"/>
</dbReference>
<dbReference type="InterPro" id="IPR017865">
    <property type="entry name" value="F-actin_cap_asu_CS"/>
</dbReference>
<dbReference type="PANTHER" id="PTHR10653">
    <property type="entry name" value="F-ACTIN-CAPPING PROTEIN SUBUNIT ALPHA"/>
    <property type="match status" value="1"/>
</dbReference>
<dbReference type="PANTHER" id="PTHR10653:SF2">
    <property type="entry name" value="F-ACTIN-CAPPING PROTEIN SUBUNIT ALPHA-2"/>
    <property type="match status" value="1"/>
</dbReference>
<dbReference type="Pfam" id="PF01267">
    <property type="entry name" value="F-actin_cap_A"/>
    <property type="match status" value="1"/>
</dbReference>
<dbReference type="PRINTS" id="PR00191">
    <property type="entry name" value="FACTINCAPA"/>
</dbReference>
<dbReference type="SUPFAM" id="SSF90096">
    <property type="entry name" value="Subunits of heterodimeric actin filament capping protein Capz"/>
    <property type="match status" value="1"/>
</dbReference>
<dbReference type="PROSITE" id="PS00748">
    <property type="entry name" value="F_ACTIN_CAPPING_A_1"/>
    <property type="match status" value="1"/>
</dbReference>
<dbReference type="PROSITE" id="PS00749">
    <property type="entry name" value="F_ACTIN_CAPPING_A_2"/>
    <property type="match status" value="1"/>
</dbReference>
<evidence type="ECO:0000250" key="1"/>
<evidence type="ECO:0000250" key="2">
    <source>
        <dbReference type="UniProtKB" id="P47755"/>
    </source>
</evidence>
<evidence type="ECO:0000305" key="3"/>
<accession>Q00PJ7</accession>
<keyword id="KW-0007">Acetylation</keyword>
<keyword id="KW-0117">Actin capping</keyword>
<keyword id="KW-0009">Actin-binding</keyword>
<keyword id="KW-0597">Phosphoprotein</keyword>
<proteinExistence type="inferred from homology"/>
<organism>
    <name type="scientific">Atelerix albiventris</name>
    <name type="common">Middle-African hedgehog</name>
    <name type="synonym">Four-toed hedgehog</name>
    <dbReference type="NCBI Taxonomy" id="9368"/>
    <lineage>
        <taxon>Eukaryota</taxon>
        <taxon>Metazoa</taxon>
        <taxon>Chordata</taxon>
        <taxon>Craniata</taxon>
        <taxon>Vertebrata</taxon>
        <taxon>Euteleostomi</taxon>
        <taxon>Mammalia</taxon>
        <taxon>Eutheria</taxon>
        <taxon>Laurasiatheria</taxon>
        <taxon>Eulipotyphla</taxon>
        <taxon>Erinaceidae</taxon>
        <taxon>Erinaceinae</taxon>
        <taxon>Atelerix</taxon>
    </lineage>
</organism>
<reference key="1">
    <citation type="submission" date="2006-10" db="EMBL/GenBank/DDBJ databases">
        <title>NISC comparative sequencing initiative.</title>
        <authorList>
            <person name="Antonellis A."/>
            <person name="Ayele K."/>
            <person name="Benjamin B."/>
            <person name="Blakesley R.W."/>
            <person name="Boakye A."/>
            <person name="Bouffard G.G."/>
            <person name="Brinkley C."/>
            <person name="Brooks S."/>
            <person name="Chu G."/>
            <person name="Coleman H."/>
            <person name="Engle J."/>
            <person name="Gestole M."/>
            <person name="Greene A."/>
            <person name="Guan X."/>
            <person name="Gupta J."/>
            <person name="Haghighi P."/>
            <person name="Han J."/>
            <person name="Hansen N."/>
            <person name="Ho S.-L."/>
            <person name="Hu P."/>
            <person name="Hunter G."/>
            <person name="Hurle B."/>
            <person name="Idol J.R."/>
            <person name="Kwong P."/>
            <person name="Laric P."/>
            <person name="Larson S."/>
            <person name="Lee-Lin S.-Q."/>
            <person name="Legaspi R."/>
            <person name="Madden M."/>
            <person name="Maduro Q.L."/>
            <person name="Maduro V.B."/>
            <person name="Margulies E.H."/>
            <person name="Masiello C."/>
            <person name="Maskeri B."/>
            <person name="McDowell J."/>
            <person name="Mojidi H.A."/>
            <person name="Mullikin J.C."/>
            <person name="Oestreicher J.S."/>
            <person name="Park M."/>
            <person name="Portnoy M.E."/>
            <person name="Prasad A."/>
            <person name="Puri O."/>
            <person name="Reddix-Dugue N."/>
            <person name="Schandler K."/>
            <person name="Schueler M.G."/>
            <person name="Sison C."/>
            <person name="Stantripop S."/>
            <person name="Stephen E."/>
            <person name="Taye A."/>
            <person name="Thomas J.W."/>
            <person name="Thomas P.J."/>
            <person name="Tsipouri V."/>
            <person name="Ung L."/>
            <person name="Vogt J.L."/>
            <person name="Wetherby K.D."/>
            <person name="Young A."/>
            <person name="Green E.D."/>
        </authorList>
    </citation>
    <scope>NUCLEOTIDE SEQUENCE [LARGE SCALE GENOMIC DNA]</scope>
</reference>
<name>CAZA2_ATEAB</name>
<comment type="function">
    <text evidence="1">F-actin-capping proteins bind in a Ca(2+)-independent manner to the fast growing ends of actin filaments (barbed end) thereby blocking the exchange of subunits at these ends. Unlike other capping proteins (such as gelsolin and severin), these proteins do not sever actin filaments (By similarity).</text>
</comment>
<comment type="subunit">
    <text evidence="1">Component of the F-actin capping complex, composed of a heterodimer of an alpha and a beta subunit. Component of the WASH complex, composed of F-actin-capping protein subunit alpha (CAPZA1, CAPZA2 or CAPZA3), F-actin-capping protein subunit beta (CAPZB), WASHC1, WASHC2, WASHC3, WASHC4 and WASHC5. Interacts with RCSD1/CAPZIP (By similarity).</text>
</comment>
<comment type="similarity">
    <text evidence="3">Belongs to the F-actin-capping protein alpha subunit family.</text>
</comment>
<gene>
    <name type="primary">CAPZA2</name>
</gene>